<dbReference type="EC" id="2.7.7.18" evidence="1"/>
<dbReference type="EMBL" id="CP001407">
    <property type="protein sequence ID" value="ACO28764.1"/>
    <property type="molecule type" value="Genomic_DNA"/>
</dbReference>
<dbReference type="RefSeq" id="WP_001226054.1">
    <property type="nucleotide sequence ID" value="NZ_CP009318.1"/>
</dbReference>
<dbReference type="SMR" id="C1ESM6"/>
<dbReference type="KEGG" id="bcx:BCA_4443"/>
<dbReference type="PATRIC" id="fig|572264.18.peg.4391"/>
<dbReference type="UniPathway" id="UPA00253">
    <property type="reaction ID" value="UER00332"/>
</dbReference>
<dbReference type="Proteomes" id="UP000002210">
    <property type="component" value="Chromosome"/>
</dbReference>
<dbReference type="GO" id="GO:0005524">
    <property type="term" value="F:ATP binding"/>
    <property type="evidence" value="ECO:0007669"/>
    <property type="project" value="UniProtKB-KW"/>
</dbReference>
<dbReference type="GO" id="GO:0004515">
    <property type="term" value="F:nicotinate-nucleotide adenylyltransferase activity"/>
    <property type="evidence" value="ECO:0007669"/>
    <property type="project" value="UniProtKB-UniRule"/>
</dbReference>
<dbReference type="GO" id="GO:0009435">
    <property type="term" value="P:NAD biosynthetic process"/>
    <property type="evidence" value="ECO:0007669"/>
    <property type="project" value="UniProtKB-UniRule"/>
</dbReference>
<dbReference type="CDD" id="cd02165">
    <property type="entry name" value="NMNAT"/>
    <property type="match status" value="1"/>
</dbReference>
<dbReference type="FunFam" id="3.40.50.620:FF:000079">
    <property type="entry name" value="Probable nicotinate-nucleotide adenylyltransferase"/>
    <property type="match status" value="1"/>
</dbReference>
<dbReference type="Gene3D" id="3.40.50.620">
    <property type="entry name" value="HUPs"/>
    <property type="match status" value="1"/>
</dbReference>
<dbReference type="HAMAP" id="MF_00244">
    <property type="entry name" value="NaMN_adenylyltr"/>
    <property type="match status" value="1"/>
</dbReference>
<dbReference type="InterPro" id="IPR004821">
    <property type="entry name" value="Cyt_trans-like"/>
</dbReference>
<dbReference type="InterPro" id="IPR005248">
    <property type="entry name" value="NadD/NMNAT"/>
</dbReference>
<dbReference type="InterPro" id="IPR014729">
    <property type="entry name" value="Rossmann-like_a/b/a_fold"/>
</dbReference>
<dbReference type="NCBIfam" id="TIGR00125">
    <property type="entry name" value="cyt_tran_rel"/>
    <property type="match status" value="1"/>
</dbReference>
<dbReference type="NCBIfam" id="TIGR00482">
    <property type="entry name" value="nicotinate (nicotinamide) nucleotide adenylyltransferase"/>
    <property type="match status" value="1"/>
</dbReference>
<dbReference type="NCBIfam" id="NF000840">
    <property type="entry name" value="PRK00071.1-3"/>
    <property type="match status" value="1"/>
</dbReference>
<dbReference type="NCBIfam" id="NF000841">
    <property type="entry name" value="PRK00071.1-4"/>
    <property type="match status" value="1"/>
</dbReference>
<dbReference type="PANTHER" id="PTHR39321">
    <property type="entry name" value="NICOTINATE-NUCLEOTIDE ADENYLYLTRANSFERASE-RELATED"/>
    <property type="match status" value="1"/>
</dbReference>
<dbReference type="PANTHER" id="PTHR39321:SF3">
    <property type="entry name" value="PHOSPHOPANTETHEINE ADENYLYLTRANSFERASE"/>
    <property type="match status" value="1"/>
</dbReference>
<dbReference type="Pfam" id="PF01467">
    <property type="entry name" value="CTP_transf_like"/>
    <property type="match status" value="1"/>
</dbReference>
<dbReference type="SUPFAM" id="SSF52374">
    <property type="entry name" value="Nucleotidylyl transferase"/>
    <property type="match status" value="1"/>
</dbReference>
<reference key="1">
    <citation type="submission" date="2009-02" db="EMBL/GenBank/DDBJ databases">
        <title>Genome sequence of Bacillus cereus 03BB102.</title>
        <authorList>
            <person name="Dodson R.J."/>
            <person name="Jackson P."/>
            <person name="Munk A.C."/>
            <person name="Brettin T."/>
            <person name="Bruce D."/>
            <person name="Detter C."/>
            <person name="Tapia R."/>
            <person name="Han C."/>
            <person name="Sutton G."/>
            <person name="Sims D."/>
        </authorList>
    </citation>
    <scope>NUCLEOTIDE SEQUENCE [LARGE SCALE GENOMIC DNA]</scope>
    <source>
        <strain>03BB102</strain>
    </source>
</reference>
<proteinExistence type="inferred from homology"/>
<comment type="function">
    <text evidence="1">Catalyzes the reversible adenylation of nicotinate mononucleotide (NaMN) to nicotinic acid adenine dinucleotide (NaAD).</text>
</comment>
<comment type="catalytic activity">
    <reaction evidence="1">
        <text>nicotinate beta-D-ribonucleotide + ATP + H(+) = deamido-NAD(+) + diphosphate</text>
        <dbReference type="Rhea" id="RHEA:22860"/>
        <dbReference type="ChEBI" id="CHEBI:15378"/>
        <dbReference type="ChEBI" id="CHEBI:30616"/>
        <dbReference type="ChEBI" id="CHEBI:33019"/>
        <dbReference type="ChEBI" id="CHEBI:57502"/>
        <dbReference type="ChEBI" id="CHEBI:58437"/>
        <dbReference type="EC" id="2.7.7.18"/>
    </reaction>
</comment>
<comment type="pathway">
    <text evidence="1">Cofactor biosynthesis; NAD(+) biosynthesis; deamido-NAD(+) from nicotinate D-ribonucleotide: step 1/1.</text>
</comment>
<comment type="similarity">
    <text evidence="1">Belongs to the NadD family.</text>
</comment>
<gene>
    <name evidence="1" type="primary">nadD</name>
    <name type="ordered locus">BCA_4443</name>
</gene>
<keyword id="KW-0067">ATP-binding</keyword>
<keyword id="KW-0520">NAD</keyword>
<keyword id="KW-0547">Nucleotide-binding</keyword>
<keyword id="KW-0548">Nucleotidyltransferase</keyword>
<keyword id="KW-0662">Pyridine nucleotide biosynthesis</keyword>
<keyword id="KW-0808">Transferase</keyword>
<organism>
    <name type="scientific">Bacillus cereus (strain 03BB102)</name>
    <dbReference type="NCBI Taxonomy" id="572264"/>
    <lineage>
        <taxon>Bacteria</taxon>
        <taxon>Bacillati</taxon>
        <taxon>Bacillota</taxon>
        <taxon>Bacilli</taxon>
        <taxon>Bacillales</taxon>
        <taxon>Bacillaceae</taxon>
        <taxon>Bacillus</taxon>
        <taxon>Bacillus cereus group</taxon>
    </lineage>
</organism>
<sequence length="189" mass="21909">MRKIGIIGGTFDPPHYGHLLIANEVYHALNLEEVWFLPNQIPPHKQGRNITSVESRLQMLELATEAEEHFSICLEELSRKGPSYTYDTMLQLTKKYPDVQFHFIIGGDMVEYLPKWYNIEALLDLVTFVGVARPGYTLHTPYPITTVEIPEFAVSSSLLRERYKEKKTCKYLLPEKVQVYIERNGLYES</sequence>
<name>NADD_BACC3</name>
<protein>
    <recommendedName>
        <fullName evidence="1">Probable nicotinate-nucleotide adenylyltransferase</fullName>
        <ecNumber evidence="1">2.7.7.18</ecNumber>
    </recommendedName>
    <alternativeName>
        <fullName evidence="1">Deamido-NAD(+) diphosphorylase</fullName>
    </alternativeName>
    <alternativeName>
        <fullName evidence="1">Deamido-NAD(+) pyrophosphorylase</fullName>
    </alternativeName>
    <alternativeName>
        <fullName evidence="1">Nicotinate mononucleotide adenylyltransferase</fullName>
        <shortName evidence="1">NaMN adenylyltransferase</shortName>
    </alternativeName>
</protein>
<feature type="chain" id="PRO_1000125338" description="Probable nicotinate-nucleotide adenylyltransferase">
    <location>
        <begin position="1"/>
        <end position="189"/>
    </location>
</feature>
<evidence type="ECO:0000255" key="1">
    <source>
        <dbReference type="HAMAP-Rule" id="MF_00244"/>
    </source>
</evidence>
<accession>C1ESM6</accession>